<accession>A3PNS5</accession>
<keyword id="KW-0963">Cytoplasm</keyword>
<keyword id="KW-0489">Methyltransferase</keyword>
<keyword id="KW-0698">rRNA processing</keyword>
<keyword id="KW-0949">S-adenosyl-L-methionine</keyword>
<keyword id="KW-0808">Transferase</keyword>
<name>RSMG_CERS1</name>
<protein>
    <recommendedName>
        <fullName evidence="1">Ribosomal RNA small subunit methyltransferase G</fullName>
        <ecNumber evidence="1">2.1.1.170</ecNumber>
    </recommendedName>
    <alternativeName>
        <fullName evidence="1">16S rRNA 7-methylguanosine methyltransferase</fullName>
        <shortName evidence="1">16S rRNA m7G methyltransferase</shortName>
    </alternativeName>
</protein>
<reference key="1">
    <citation type="submission" date="2007-02" db="EMBL/GenBank/DDBJ databases">
        <title>Complete sequence of chromosome 1 of Rhodobacter sphaeroides ATCC 17029.</title>
        <authorList>
            <person name="Copeland A."/>
            <person name="Lucas S."/>
            <person name="Lapidus A."/>
            <person name="Barry K."/>
            <person name="Detter J.C."/>
            <person name="Glavina del Rio T."/>
            <person name="Hammon N."/>
            <person name="Israni S."/>
            <person name="Dalin E."/>
            <person name="Tice H."/>
            <person name="Pitluck S."/>
            <person name="Kiss H."/>
            <person name="Brettin T."/>
            <person name="Bruce D."/>
            <person name="Han C."/>
            <person name="Tapia R."/>
            <person name="Gilna P."/>
            <person name="Schmutz J."/>
            <person name="Larimer F."/>
            <person name="Land M."/>
            <person name="Hauser L."/>
            <person name="Kyrpides N."/>
            <person name="Mikhailova N."/>
            <person name="Richardson P."/>
            <person name="Mackenzie C."/>
            <person name="Choudhary M."/>
            <person name="Donohue T.J."/>
            <person name="Kaplan S."/>
        </authorList>
    </citation>
    <scope>NUCLEOTIDE SEQUENCE [LARGE SCALE GENOMIC DNA]</scope>
    <source>
        <strain>ATCC 17029 / ATH 2.4.9</strain>
    </source>
</reference>
<feature type="chain" id="PRO_0000335412" description="Ribosomal RNA small subunit methyltransferase G">
    <location>
        <begin position="1"/>
        <end position="206"/>
    </location>
</feature>
<feature type="binding site" evidence="1">
    <location>
        <position position="71"/>
    </location>
    <ligand>
        <name>S-adenosyl-L-methionine</name>
        <dbReference type="ChEBI" id="CHEBI:59789"/>
    </ligand>
</feature>
<feature type="binding site" evidence="1">
    <location>
        <position position="76"/>
    </location>
    <ligand>
        <name>S-adenosyl-L-methionine</name>
        <dbReference type="ChEBI" id="CHEBI:59789"/>
    </ligand>
</feature>
<feature type="binding site" evidence="1">
    <location>
        <begin position="125"/>
        <end position="126"/>
    </location>
    <ligand>
        <name>S-adenosyl-L-methionine</name>
        <dbReference type="ChEBI" id="CHEBI:59789"/>
    </ligand>
</feature>
<feature type="binding site" evidence="1">
    <location>
        <position position="139"/>
    </location>
    <ligand>
        <name>S-adenosyl-L-methionine</name>
        <dbReference type="ChEBI" id="CHEBI:59789"/>
    </ligand>
</feature>
<sequence>MMQESVLAQLDVSRETSEKLSHFVALVEKWNKAVNLIGRSTVDSIWTRHVLDSAQLRTHLTSQPRLWLDLGSGSGFPGIVVAIMAADESPESRFVLVESDQRKATFLRTACRELKLSAAVLAARIESLPPQKADVISARALAALPDLCALAAPHLAPNGICLFPKGVGHISEIAAARQSWNMEMETLPSLTDPDAVILKLKALAHV</sequence>
<organism>
    <name type="scientific">Cereibacter sphaeroides (strain ATCC 17029 / ATH 2.4.9)</name>
    <name type="common">Rhodobacter sphaeroides</name>
    <dbReference type="NCBI Taxonomy" id="349101"/>
    <lineage>
        <taxon>Bacteria</taxon>
        <taxon>Pseudomonadati</taxon>
        <taxon>Pseudomonadota</taxon>
        <taxon>Alphaproteobacteria</taxon>
        <taxon>Rhodobacterales</taxon>
        <taxon>Paracoccaceae</taxon>
        <taxon>Cereibacter</taxon>
    </lineage>
</organism>
<comment type="function">
    <text evidence="1">Specifically methylates the N7 position of guanine in position 527 of 16S rRNA.</text>
</comment>
<comment type="catalytic activity">
    <reaction evidence="1">
        <text>guanosine(527) in 16S rRNA + S-adenosyl-L-methionine = N(7)-methylguanosine(527) in 16S rRNA + S-adenosyl-L-homocysteine</text>
        <dbReference type="Rhea" id="RHEA:42732"/>
        <dbReference type="Rhea" id="RHEA-COMP:10209"/>
        <dbReference type="Rhea" id="RHEA-COMP:10210"/>
        <dbReference type="ChEBI" id="CHEBI:57856"/>
        <dbReference type="ChEBI" id="CHEBI:59789"/>
        <dbReference type="ChEBI" id="CHEBI:74269"/>
        <dbReference type="ChEBI" id="CHEBI:74480"/>
        <dbReference type="EC" id="2.1.1.170"/>
    </reaction>
</comment>
<comment type="subcellular location">
    <subcellularLocation>
        <location evidence="1">Cytoplasm</location>
    </subcellularLocation>
</comment>
<comment type="similarity">
    <text evidence="1">Belongs to the methyltransferase superfamily. RNA methyltransferase RsmG family.</text>
</comment>
<gene>
    <name evidence="1" type="primary">rsmG</name>
    <name type="ordered locus">Rsph17029_2889</name>
</gene>
<dbReference type="EC" id="2.1.1.170" evidence="1"/>
<dbReference type="EMBL" id="CP000577">
    <property type="protein sequence ID" value="ABN77991.1"/>
    <property type="molecule type" value="Genomic_DNA"/>
</dbReference>
<dbReference type="RefSeq" id="WP_011841948.1">
    <property type="nucleotide sequence ID" value="NC_009049.1"/>
</dbReference>
<dbReference type="SMR" id="A3PNS5"/>
<dbReference type="KEGG" id="rsh:Rsph17029_2889"/>
<dbReference type="HOGENOM" id="CLU_065341_1_1_5"/>
<dbReference type="GO" id="GO:0005829">
    <property type="term" value="C:cytosol"/>
    <property type="evidence" value="ECO:0007669"/>
    <property type="project" value="TreeGrafter"/>
</dbReference>
<dbReference type="GO" id="GO:0070043">
    <property type="term" value="F:rRNA (guanine-N7-)-methyltransferase activity"/>
    <property type="evidence" value="ECO:0007669"/>
    <property type="project" value="UniProtKB-UniRule"/>
</dbReference>
<dbReference type="Gene3D" id="3.40.50.150">
    <property type="entry name" value="Vaccinia Virus protein VP39"/>
    <property type="match status" value="1"/>
</dbReference>
<dbReference type="HAMAP" id="MF_00074">
    <property type="entry name" value="16SrRNA_methyltr_G"/>
    <property type="match status" value="1"/>
</dbReference>
<dbReference type="InterPro" id="IPR003682">
    <property type="entry name" value="rRNA_ssu_MeTfrase_G"/>
</dbReference>
<dbReference type="InterPro" id="IPR029063">
    <property type="entry name" value="SAM-dependent_MTases_sf"/>
</dbReference>
<dbReference type="NCBIfam" id="TIGR00138">
    <property type="entry name" value="rsmG_gidB"/>
    <property type="match status" value="1"/>
</dbReference>
<dbReference type="PANTHER" id="PTHR31760">
    <property type="entry name" value="S-ADENOSYL-L-METHIONINE-DEPENDENT METHYLTRANSFERASES SUPERFAMILY PROTEIN"/>
    <property type="match status" value="1"/>
</dbReference>
<dbReference type="PANTHER" id="PTHR31760:SF0">
    <property type="entry name" value="S-ADENOSYL-L-METHIONINE-DEPENDENT METHYLTRANSFERASES SUPERFAMILY PROTEIN"/>
    <property type="match status" value="1"/>
</dbReference>
<dbReference type="Pfam" id="PF02527">
    <property type="entry name" value="GidB"/>
    <property type="match status" value="1"/>
</dbReference>
<dbReference type="PIRSF" id="PIRSF003078">
    <property type="entry name" value="GidB"/>
    <property type="match status" value="1"/>
</dbReference>
<dbReference type="SUPFAM" id="SSF53335">
    <property type="entry name" value="S-adenosyl-L-methionine-dependent methyltransferases"/>
    <property type="match status" value="1"/>
</dbReference>
<proteinExistence type="inferred from homology"/>
<evidence type="ECO:0000255" key="1">
    <source>
        <dbReference type="HAMAP-Rule" id="MF_00074"/>
    </source>
</evidence>